<reference key="1">
    <citation type="journal article" date="2005" name="Nucleic Acids Res.">
        <title>Genome dynamics and diversity of Shigella species, the etiologic agents of bacillary dysentery.</title>
        <authorList>
            <person name="Yang F."/>
            <person name="Yang J."/>
            <person name="Zhang X."/>
            <person name="Chen L."/>
            <person name="Jiang Y."/>
            <person name="Yan Y."/>
            <person name="Tang X."/>
            <person name="Wang J."/>
            <person name="Xiong Z."/>
            <person name="Dong J."/>
            <person name="Xue Y."/>
            <person name="Zhu Y."/>
            <person name="Xu X."/>
            <person name="Sun L."/>
            <person name="Chen S."/>
            <person name="Nie H."/>
            <person name="Peng J."/>
            <person name="Xu J."/>
            <person name="Wang Y."/>
            <person name="Yuan Z."/>
            <person name="Wen Y."/>
            <person name="Yao Z."/>
            <person name="Shen Y."/>
            <person name="Qiang B."/>
            <person name="Hou Y."/>
            <person name="Yu J."/>
            <person name="Jin Q."/>
        </authorList>
    </citation>
    <scope>NUCLEOTIDE SEQUENCE [LARGE SCALE GENOMIC DNA]</scope>
    <source>
        <strain>Ss046</strain>
    </source>
</reference>
<dbReference type="EMBL" id="CP000038">
    <property type="protein sequence ID" value="AAZ88083.1"/>
    <property type="molecule type" value="Genomic_DNA"/>
</dbReference>
<dbReference type="RefSeq" id="WP_000460707.1">
    <property type="nucleotide sequence ID" value="NC_007384.1"/>
</dbReference>
<dbReference type="KEGG" id="ssn:SSON_1372"/>
<dbReference type="HOGENOM" id="CLU_125889_0_0_6"/>
<dbReference type="Proteomes" id="UP000002529">
    <property type="component" value="Chromosome"/>
</dbReference>
<dbReference type="GO" id="GO:0005886">
    <property type="term" value="C:plasma membrane"/>
    <property type="evidence" value="ECO:0007669"/>
    <property type="project" value="UniProtKB-SubCell"/>
</dbReference>
<dbReference type="HAMAP" id="MF_01874">
    <property type="entry name" value="UPF0756"/>
    <property type="match status" value="1"/>
</dbReference>
<dbReference type="InterPro" id="IPR007382">
    <property type="entry name" value="UPF0756_TM"/>
</dbReference>
<dbReference type="PANTHER" id="PTHR38452">
    <property type="entry name" value="UPF0756 MEMBRANE PROTEIN YEAL"/>
    <property type="match status" value="1"/>
</dbReference>
<dbReference type="PANTHER" id="PTHR38452:SF1">
    <property type="entry name" value="UPF0756 MEMBRANE PROTEIN YEAL"/>
    <property type="match status" value="1"/>
</dbReference>
<dbReference type="Pfam" id="PF04284">
    <property type="entry name" value="DUF441"/>
    <property type="match status" value="1"/>
</dbReference>
<organism>
    <name type="scientific">Shigella sonnei (strain Ss046)</name>
    <dbReference type="NCBI Taxonomy" id="300269"/>
    <lineage>
        <taxon>Bacteria</taxon>
        <taxon>Pseudomonadati</taxon>
        <taxon>Pseudomonadota</taxon>
        <taxon>Gammaproteobacteria</taxon>
        <taxon>Enterobacterales</taxon>
        <taxon>Enterobacteriaceae</taxon>
        <taxon>Shigella</taxon>
    </lineage>
</organism>
<evidence type="ECO:0000255" key="1">
    <source>
        <dbReference type="HAMAP-Rule" id="MF_01874"/>
    </source>
</evidence>
<keyword id="KW-1003">Cell membrane</keyword>
<keyword id="KW-0472">Membrane</keyword>
<keyword id="KW-1185">Reference proteome</keyword>
<keyword id="KW-0812">Transmembrane</keyword>
<keyword id="KW-1133">Transmembrane helix</keyword>
<comment type="subcellular location">
    <subcellularLocation>
        <location evidence="1">Cell membrane</location>
        <topology evidence="1">Multi-pass membrane protein</topology>
    </subcellularLocation>
</comment>
<comment type="similarity">
    <text evidence="1">Belongs to the UPF0756 family.</text>
</comment>
<sequence length="148" mass="15256">MFDVTLLILLGLAALGFISHNTTVAVSILVLIIVRVTPLSTFFPWIEKQGLSIGIIILTIGVMAPIASGTLPPSTLIHSFLNWKSLVAIAVGVIVSWLGGRGVTLMGSQPQLVAGLLVGTVLGVALFRGVPVGPLIAAGLVSLIVGKQ</sequence>
<proteinExistence type="inferred from homology"/>
<protein>
    <recommendedName>
        <fullName evidence="1">UPF0756 membrane protein YeaL</fullName>
    </recommendedName>
</protein>
<feature type="chain" id="PRO_0000388938" description="UPF0756 membrane protein YeaL">
    <location>
        <begin position="1"/>
        <end position="148"/>
    </location>
</feature>
<feature type="transmembrane region" description="Helical" evidence="1">
    <location>
        <begin position="14"/>
        <end position="34"/>
    </location>
</feature>
<feature type="transmembrane region" description="Helical" evidence="1">
    <location>
        <begin position="51"/>
        <end position="71"/>
    </location>
</feature>
<feature type="transmembrane region" description="Helical" evidence="1">
    <location>
        <begin position="86"/>
        <end position="106"/>
    </location>
</feature>
<feature type="transmembrane region" description="Helical" evidence="1">
    <location>
        <begin position="121"/>
        <end position="141"/>
    </location>
</feature>
<gene>
    <name evidence="1" type="primary">yeaL</name>
    <name type="ordered locus">SSON_1372</name>
</gene>
<accession>Q3Z2C9</accession>
<name>YEAL_SHISS</name>